<accession>Q5RCB9</accession>
<reference key="1">
    <citation type="submission" date="2004-11" db="EMBL/GenBank/DDBJ databases">
        <authorList>
            <consortium name="The German cDNA consortium"/>
        </authorList>
    </citation>
    <scope>NUCLEOTIDE SEQUENCE [LARGE SCALE MRNA]</scope>
    <source>
        <tissue>Kidney</tissue>
    </source>
</reference>
<dbReference type="EC" id="2.4.1.-" evidence="1"/>
<dbReference type="EMBL" id="CR858355">
    <property type="protein sequence ID" value="CAH90588.1"/>
    <property type="molecule type" value="mRNA"/>
</dbReference>
<dbReference type="RefSeq" id="NP_001127306.1">
    <property type="nucleotide sequence ID" value="NM_001133834.1"/>
</dbReference>
<dbReference type="SMR" id="Q5RCB9"/>
<dbReference type="FunCoup" id="Q5RCB9">
    <property type="interactions" value="664"/>
</dbReference>
<dbReference type="STRING" id="9601.ENSPPYP00000001624"/>
<dbReference type="CAZy" id="GT13">
    <property type="family name" value="Glycosyltransferase Family 13"/>
</dbReference>
<dbReference type="GeneID" id="100174367"/>
<dbReference type="KEGG" id="pon:100174367"/>
<dbReference type="CTD" id="55624"/>
<dbReference type="eggNOG" id="ENOG502QSG3">
    <property type="taxonomic scope" value="Eukaryota"/>
</dbReference>
<dbReference type="InParanoid" id="Q5RCB9"/>
<dbReference type="OrthoDB" id="440755at2759"/>
<dbReference type="UniPathway" id="UPA00378"/>
<dbReference type="Proteomes" id="UP000001595">
    <property type="component" value="Unplaced"/>
</dbReference>
<dbReference type="GO" id="GO:0000139">
    <property type="term" value="C:Golgi membrane"/>
    <property type="evidence" value="ECO:0000250"/>
    <property type="project" value="UniProtKB"/>
</dbReference>
<dbReference type="GO" id="GO:0016020">
    <property type="term" value="C:membrane"/>
    <property type="evidence" value="ECO:0000250"/>
    <property type="project" value="UniProtKB"/>
</dbReference>
<dbReference type="GO" id="GO:0008375">
    <property type="term" value="F:acetylglucosaminyltransferase activity"/>
    <property type="evidence" value="ECO:0000250"/>
    <property type="project" value="UniProtKB"/>
</dbReference>
<dbReference type="GO" id="GO:0047223">
    <property type="term" value="F:beta-1,3-galactosyl-O-glycosyl-glycoprotein beta-1,3-N-acetylglucosaminyltransferase activity"/>
    <property type="evidence" value="ECO:0007669"/>
    <property type="project" value="TreeGrafter"/>
</dbReference>
<dbReference type="GO" id="GO:0030246">
    <property type="term" value="F:carbohydrate binding"/>
    <property type="evidence" value="ECO:0007669"/>
    <property type="project" value="UniProtKB-KW"/>
</dbReference>
<dbReference type="GO" id="GO:0030145">
    <property type="term" value="F:manganese ion binding"/>
    <property type="evidence" value="ECO:0000250"/>
    <property type="project" value="UniProtKB"/>
</dbReference>
<dbReference type="GO" id="GO:0016266">
    <property type="term" value="P:O-glycan processing"/>
    <property type="evidence" value="ECO:0000250"/>
    <property type="project" value="UniProtKB"/>
</dbReference>
<dbReference type="GO" id="GO:0006493">
    <property type="term" value="P:protein O-linked glycosylation"/>
    <property type="evidence" value="ECO:0000250"/>
    <property type="project" value="UniProtKB"/>
</dbReference>
<dbReference type="CDD" id="cd02514">
    <property type="entry name" value="GT13_GLCNAC-TI"/>
    <property type="match status" value="1"/>
</dbReference>
<dbReference type="CDD" id="cd13937">
    <property type="entry name" value="PANDER_GnT-1_2_like"/>
    <property type="match status" value="1"/>
</dbReference>
<dbReference type="FunFam" id="3.90.550.10:FF:000038">
    <property type="entry name" value="protein O-linked-mannose beta-1,2-N-acetylglucosaminyltransferase 1 isoform X1"/>
    <property type="match status" value="1"/>
</dbReference>
<dbReference type="Gene3D" id="3.90.550.10">
    <property type="entry name" value="Spore Coat Polysaccharide Biosynthesis Protein SpsA, Chain A"/>
    <property type="match status" value="1"/>
</dbReference>
<dbReference type="InterPro" id="IPR004139">
    <property type="entry name" value="Glyco_trans_13"/>
</dbReference>
<dbReference type="InterPro" id="IPR039477">
    <property type="entry name" value="ILEI/PANDER_dom"/>
</dbReference>
<dbReference type="InterPro" id="IPR029044">
    <property type="entry name" value="Nucleotide-diphossugar_trans"/>
</dbReference>
<dbReference type="InterPro" id="IPR052463">
    <property type="entry name" value="O-linked_mannose_GnT"/>
</dbReference>
<dbReference type="InterPro" id="IPR039474">
    <property type="entry name" value="POMGNT1_PANDER-like"/>
</dbReference>
<dbReference type="PANTHER" id="PTHR46396">
    <property type="entry name" value="PROTEIN O-LINKED-MANNOSE BETA-1,2-N-ACETYLGLUCOSAMINYLTRANSFERASE 1"/>
    <property type="match status" value="1"/>
</dbReference>
<dbReference type="PANTHER" id="PTHR46396:SF1">
    <property type="entry name" value="PROTEIN O-LINKED-MANNOSE BETA-1,2-N-ACETYLGLUCOSAMINYLTRANSFERASE 1"/>
    <property type="match status" value="1"/>
</dbReference>
<dbReference type="Pfam" id="PF03071">
    <property type="entry name" value="GNT-I"/>
    <property type="match status" value="1"/>
</dbReference>
<dbReference type="Pfam" id="PF15711">
    <property type="entry name" value="ILEI"/>
    <property type="match status" value="1"/>
</dbReference>
<dbReference type="SUPFAM" id="SSF53448">
    <property type="entry name" value="Nucleotide-diphospho-sugar transferases"/>
    <property type="match status" value="1"/>
</dbReference>
<dbReference type="PROSITE" id="PS52031">
    <property type="entry name" value="GG_LECTIN"/>
    <property type="match status" value="1"/>
</dbReference>
<organism>
    <name type="scientific">Pongo abelii</name>
    <name type="common">Sumatran orangutan</name>
    <name type="synonym">Pongo pygmaeus abelii</name>
    <dbReference type="NCBI Taxonomy" id="9601"/>
    <lineage>
        <taxon>Eukaryota</taxon>
        <taxon>Metazoa</taxon>
        <taxon>Chordata</taxon>
        <taxon>Craniata</taxon>
        <taxon>Vertebrata</taxon>
        <taxon>Euteleostomi</taxon>
        <taxon>Mammalia</taxon>
        <taxon>Eutheria</taxon>
        <taxon>Euarchontoglires</taxon>
        <taxon>Primates</taxon>
        <taxon>Haplorrhini</taxon>
        <taxon>Catarrhini</taxon>
        <taxon>Hominidae</taxon>
        <taxon>Pongo</taxon>
    </lineage>
</organism>
<comment type="function">
    <text evidence="1">Participates in O-mannosyl glycosylation by catalyzing the addition of N-acetylglucosamine to O-linked mannose on glycoproteins. Catalyzes the synthesis of the GlcNAc(beta1-2)Man(alpha1-)O-Ser/Thr moiety on alpha-dystroglycan and other O-mannosylated proteins, providing the necessary basis for the addition of further carbohydrate moieties. Is specific for alpha linked terminal mannose.</text>
</comment>
<comment type="catalytic activity">
    <reaction evidence="1">
        <text>3-O-(alpha-D-mannosyl)-L-threonyl-[protein] + UDP-N-acetyl-alpha-D-glucosamine = 3-O-(N-acetyl-beta-D-glucosaminyl-(1-&gt;2)-alpha-D-mannosyl)-L-threonyl-[protein] + UDP + H(+)</text>
        <dbReference type="Rhea" id="RHEA:54128"/>
        <dbReference type="Rhea" id="RHEA-COMP:13547"/>
        <dbReference type="Rhea" id="RHEA-COMP:13802"/>
        <dbReference type="ChEBI" id="CHEBI:15378"/>
        <dbReference type="ChEBI" id="CHEBI:57705"/>
        <dbReference type="ChEBI" id="CHEBI:58223"/>
        <dbReference type="ChEBI" id="CHEBI:137323"/>
        <dbReference type="ChEBI" id="CHEBI:138067"/>
    </reaction>
</comment>
<comment type="cofactor">
    <cofactor evidence="1">
        <name>Mn(2+)</name>
        <dbReference type="ChEBI" id="CHEBI:29035"/>
    </cofactor>
    <text evidence="1">The manganese ion interacts primarily with the substrate UDP-N-acetylglucosamine.</text>
</comment>
<comment type="pathway">
    <text evidence="1">Protein modification; protein glycosylation.</text>
</comment>
<comment type="subunit">
    <text evidence="1">Interacts with DAG1 (via O-linked mannose moiety). Interacts (via transmembrane domain) with FKTN; the interaction is direct and is required for normal location in Golgi membranes.</text>
</comment>
<comment type="subcellular location">
    <subcellularLocation>
        <location evidence="1">Golgi apparatus membrane</location>
        <topology evidence="1">Single-pass type II membrane protein</topology>
    </subcellularLocation>
</comment>
<comment type="domain">
    <text evidence="1">The GG-type lectin domain is known as the stem domain in POMGnT1. It mediates specific interaction with beta-linked N-acetylglucosamine moieties of O-glycosylated proteins. It also interacts with its product, N-acetyl-beta-D-glucosaminyl-(1-&gt;2)-O-alpha-D-mannosylprotein.</text>
</comment>
<comment type="similarity">
    <text evidence="5">Belongs to the glycosyltransferase 13 family.</text>
</comment>
<evidence type="ECO:0000250" key="1">
    <source>
        <dbReference type="UniProtKB" id="Q8WZA1"/>
    </source>
</evidence>
<evidence type="ECO:0000255" key="2"/>
<evidence type="ECO:0000255" key="3">
    <source>
        <dbReference type="PROSITE-ProRule" id="PRU01375"/>
    </source>
</evidence>
<evidence type="ECO:0000256" key="4">
    <source>
        <dbReference type="SAM" id="MobiDB-lite"/>
    </source>
</evidence>
<evidence type="ECO:0000305" key="5"/>
<gene>
    <name type="primary">POMGNT1</name>
</gene>
<sequence length="660" mass="75078">MDDWKPSPLIKPFGARKKRSWYLTWKYKLTNQRALRRFCQTGAVLFLLVTVIVNIKLILDTRRAISEANEDPEPEQDYDEALGRLEPPRRRGSGSRRVLDVEVYSSRSKVYVAVDGTTVLEDEAREQGRGIHVIVLNQATGHVMAKRVFDTYSPHEDEAMVLFLNMVAPGRVLICTVKDEGSFHLKDTAKALLRSLGSQAGPALGWRDTWAFVGRKGGPVLGEKHSKSPALSSWGDPVLLKTDVPLSSAEEAECHWADTELNRRRRRFCSKVEGYGSVCSCKDPTPIEFSPDPLPDNKVLNVPVAVIAGNRPNYLYRMLRSLLSAQGVSPQMITVFIDGYYEEPMDVVALFGLRGIQHTPIGIKNARVSQHYKASLTATFNLFPEAKFAVVLEEDLDIAVDFFSFLSQSIHLLEEDDSLYCISAWNDQGYEHTAEDPALLYRVETMPGLGWVLRRSLYKEELEPKWPTPEKLWDWDMWMRMPEQRRGRECIIPDVSRSYHFGIVGLNMNGYFHEAYFKKHKFNTVPGVQLRNVDSLKKEAYEVEVHRLLSEAEVLDHSKNPCEDSFLPDTEGHTYVAFIRMEKDDDFTTWTQLAKCLHIWDLDVRGNHRGLWRLFRKKNHFLVVGVPASPYSVKKPPSGTPIFLEPPPKEEGAPGAAEQT</sequence>
<proteinExistence type="evidence at transcript level"/>
<keyword id="KW-1015">Disulfide bond</keyword>
<keyword id="KW-0328">Glycosyltransferase</keyword>
<keyword id="KW-0333">Golgi apparatus</keyword>
<keyword id="KW-0430">Lectin</keyword>
<keyword id="KW-0464">Manganese</keyword>
<keyword id="KW-0472">Membrane</keyword>
<keyword id="KW-0479">Metal-binding</keyword>
<keyword id="KW-0597">Phosphoprotein</keyword>
<keyword id="KW-1185">Reference proteome</keyword>
<keyword id="KW-0735">Signal-anchor</keyword>
<keyword id="KW-0808">Transferase</keyword>
<keyword id="KW-0812">Transmembrane</keyword>
<keyword id="KW-1133">Transmembrane helix</keyword>
<name>PMGT1_PONAB</name>
<feature type="chain" id="PRO_0000191392" description="Protein O-linked-mannose beta-1,2-N-acetylglucosaminyltransferase 1">
    <location>
        <begin position="1"/>
        <end position="660"/>
    </location>
</feature>
<feature type="topological domain" description="Cytoplasmic" evidence="2">
    <location>
        <begin position="1"/>
        <end position="37"/>
    </location>
</feature>
<feature type="transmembrane region" description="Helical; Signal-anchor for type II membrane protein" evidence="2">
    <location>
        <begin position="38"/>
        <end position="58"/>
    </location>
</feature>
<feature type="topological domain" description="Lumenal" evidence="2">
    <location>
        <begin position="59"/>
        <end position="660"/>
    </location>
</feature>
<feature type="domain" description="GG-type lectin" evidence="3">
    <location>
        <begin position="97"/>
        <end position="258"/>
    </location>
</feature>
<feature type="region of interest" description="Disordered" evidence="4">
    <location>
        <begin position="68"/>
        <end position="93"/>
    </location>
</feature>
<feature type="region of interest" description="Catalytic" evidence="1">
    <location>
        <begin position="300"/>
        <end position="646"/>
    </location>
</feature>
<feature type="region of interest" description="Interaction with O-glycosylated substrate glycoprotein" evidence="1">
    <location>
        <begin position="473"/>
        <end position="481"/>
    </location>
</feature>
<feature type="region of interest" description="Interaction with O-glycosylated substrate glycoprotein" evidence="1">
    <location>
        <begin position="506"/>
        <end position="512"/>
    </location>
</feature>
<feature type="region of interest" description="Interaction with O-glycosylated substrate glycoprotein" evidence="1">
    <location>
        <begin position="600"/>
        <end position="605"/>
    </location>
</feature>
<feature type="region of interest" description="Disordered" evidence="4">
    <location>
        <begin position="633"/>
        <end position="660"/>
    </location>
</feature>
<feature type="compositionally biased region" description="Acidic residues" evidence="4">
    <location>
        <begin position="68"/>
        <end position="80"/>
    </location>
</feature>
<feature type="binding site" evidence="1">
    <location>
        <position position="129"/>
    </location>
    <ligand>
        <name>a carbohydrate</name>
        <dbReference type="ChEBI" id="CHEBI:16646"/>
    </ligand>
</feature>
<feature type="binding site" evidence="1">
    <location>
        <position position="179"/>
    </location>
    <ligand>
        <name>a carbohydrate</name>
        <dbReference type="ChEBI" id="CHEBI:16646"/>
    </ligand>
</feature>
<feature type="binding site" evidence="1">
    <location>
        <position position="207"/>
    </location>
    <ligand>
        <name>a carbohydrate</name>
        <dbReference type="ChEBI" id="CHEBI:16646"/>
    </ligand>
</feature>
<feature type="binding site" evidence="1">
    <location>
        <begin position="307"/>
        <end position="311"/>
    </location>
    <ligand>
        <name>UDP-N-acetyl-alpha-D-glucosamine</name>
        <dbReference type="ChEBI" id="CHEBI:57705"/>
    </ligand>
</feature>
<feature type="binding site" evidence="1">
    <location>
        <position position="338"/>
    </location>
    <ligand>
        <name>UDP-N-acetyl-alpha-D-glucosamine</name>
        <dbReference type="ChEBI" id="CHEBI:57705"/>
    </ligand>
</feature>
<feature type="binding site" evidence="1">
    <location>
        <position position="371"/>
    </location>
    <ligand>
        <name>UDP-N-acetyl-alpha-D-glucosamine</name>
        <dbReference type="ChEBI" id="CHEBI:57705"/>
    </ligand>
</feature>
<feature type="binding site" evidence="1">
    <location>
        <begin position="394"/>
        <end position="395"/>
    </location>
    <ligand>
        <name>UDP-N-acetyl-alpha-D-glucosamine</name>
        <dbReference type="ChEBI" id="CHEBI:57705"/>
    </ligand>
</feature>
<feature type="binding site" evidence="1">
    <location>
        <position position="395"/>
    </location>
    <ligand>
        <name>Mn(2+)</name>
        <dbReference type="ChEBI" id="CHEBI:29035"/>
    </ligand>
</feature>
<feature type="binding site" evidence="1">
    <location>
        <position position="500"/>
    </location>
    <ligand>
        <name>Mn(2+)</name>
        <dbReference type="ChEBI" id="CHEBI:29035"/>
    </ligand>
</feature>
<feature type="binding site" evidence="1">
    <location>
        <begin position="506"/>
        <end position="507"/>
    </location>
    <ligand>
        <name>UDP-N-acetyl-alpha-D-glucosamine</name>
        <dbReference type="ChEBI" id="CHEBI:57705"/>
    </ligand>
</feature>
<feature type="modified residue" description="Phosphoserine" evidence="1">
    <location>
        <position position="7"/>
    </location>
</feature>
<feature type="disulfide bond" evidence="1">
    <location>
        <begin position="254"/>
        <end position="281"/>
    </location>
</feature>
<feature type="disulfide bond" evidence="1">
    <location>
        <begin position="269"/>
        <end position="279"/>
    </location>
</feature>
<feature type="disulfide bond" evidence="1">
    <location>
        <begin position="421"/>
        <end position="490"/>
    </location>
</feature>
<feature type="disulfide bond" evidence="1">
    <location>
        <begin position="562"/>
        <end position="596"/>
    </location>
</feature>
<protein>
    <recommendedName>
        <fullName>Protein O-linked-mannose beta-1,2-N-acetylglucosaminyltransferase 1</fullName>
        <shortName>POMGnT1</shortName>
        <ecNumber evidence="1">2.4.1.-</ecNumber>
    </recommendedName>
</protein>